<accession>A6WKY5</accession>
<sequence length="420" mass="47330">MSNVRYISNLTRETYALILAGGRGSRLHELTDWRAKPALYFGGKFRIIDFPLSNCINSGIRRVGVVTQYKSHSLIRHVMRGWGHFKKELGESVEILPASQRYSENWYQGTADAVFQNIDIIRHELPKYVMVLSGDHVYRMDYAGLLAAHAESGADMTVSCLEVPIAEAAGSFGVMEVDEEMRILGFEEKPQQPKHSPGNPEMCLASMGNYVFNTEFLFDQLKKDALNESSDRDFGKDIIPAIIEKHNVFAYPFKSAFPNEQAYWRDVGTLDSFWQANMELLSPTPALNLYDAKWPIWTFQEQLPPAKFVFDDDDRRGMALDSIVSGGCIISGATVRRSVLFNEVRVCSYSLVEDSVVLPDVVVLRHCKIKNAILDRGCIIPEGMVIGYNHDHDRAKGFRVSEKGVTLVTRDMLGLPVGYE</sequence>
<name>GLGC_SHEB8</name>
<gene>
    <name evidence="1" type="primary">glgC</name>
    <name type="ordered locus">Shew185_1324</name>
</gene>
<keyword id="KW-0067">ATP-binding</keyword>
<keyword id="KW-0119">Carbohydrate metabolism</keyword>
<keyword id="KW-0320">Glycogen biosynthesis</keyword>
<keyword id="KW-0321">Glycogen metabolism</keyword>
<keyword id="KW-0547">Nucleotide-binding</keyword>
<keyword id="KW-0548">Nucleotidyltransferase</keyword>
<keyword id="KW-0808">Transferase</keyword>
<protein>
    <recommendedName>
        <fullName evidence="1">Glucose-1-phosphate adenylyltransferase</fullName>
        <ecNumber evidence="1">2.7.7.27</ecNumber>
    </recommendedName>
    <alternativeName>
        <fullName evidence="1">ADP-glucose pyrophosphorylase</fullName>
        <shortName evidence="1">ADPGlc PPase</shortName>
    </alternativeName>
    <alternativeName>
        <fullName evidence="1">ADP-glucose synthase</fullName>
    </alternativeName>
</protein>
<evidence type="ECO:0000255" key="1">
    <source>
        <dbReference type="HAMAP-Rule" id="MF_00624"/>
    </source>
</evidence>
<feature type="chain" id="PRO_1000051583" description="Glucose-1-phosphate adenylyltransferase">
    <location>
        <begin position="1"/>
        <end position="420"/>
    </location>
</feature>
<feature type="binding site" evidence="1">
    <location>
        <position position="107"/>
    </location>
    <ligand>
        <name>alpha-D-glucose 1-phosphate</name>
        <dbReference type="ChEBI" id="CHEBI:58601"/>
    </ligand>
</feature>
<feature type="binding site" evidence="1">
    <location>
        <position position="173"/>
    </location>
    <ligand>
        <name>alpha-D-glucose 1-phosphate</name>
        <dbReference type="ChEBI" id="CHEBI:58601"/>
    </ligand>
</feature>
<feature type="binding site" evidence="1">
    <location>
        <begin position="188"/>
        <end position="189"/>
    </location>
    <ligand>
        <name>alpha-D-glucose 1-phosphate</name>
        <dbReference type="ChEBI" id="CHEBI:58601"/>
    </ligand>
</feature>
<feature type="binding site" evidence="1">
    <location>
        <position position="206"/>
    </location>
    <ligand>
        <name>alpha-D-glucose 1-phosphate</name>
        <dbReference type="ChEBI" id="CHEBI:58601"/>
    </ligand>
</feature>
<dbReference type="EC" id="2.7.7.27" evidence="1"/>
<dbReference type="EMBL" id="CP000753">
    <property type="protein sequence ID" value="ABS07474.1"/>
    <property type="molecule type" value="Genomic_DNA"/>
</dbReference>
<dbReference type="RefSeq" id="WP_012088651.1">
    <property type="nucleotide sequence ID" value="NC_009665.1"/>
</dbReference>
<dbReference type="SMR" id="A6WKY5"/>
<dbReference type="KEGG" id="sbm:Shew185_1324"/>
<dbReference type="HOGENOM" id="CLU_029499_14_1_6"/>
<dbReference type="UniPathway" id="UPA00164"/>
<dbReference type="GO" id="GO:0005524">
    <property type="term" value="F:ATP binding"/>
    <property type="evidence" value="ECO:0007669"/>
    <property type="project" value="UniProtKB-KW"/>
</dbReference>
<dbReference type="GO" id="GO:0008878">
    <property type="term" value="F:glucose-1-phosphate adenylyltransferase activity"/>
    <property type="evidence" value="ECO:0007669"/>
    <property type="project" value="UniProtKB-UniRule"/>
</dbReference>
<dbReference type="GO" id="GO:0005978">
    <property type="term" value="P:glycogen biosynthetic process"/>
    <property type="evidence" value="ECO:0007669"/>
    <property type="project" value="UniProtKB-UniRule"/>
</dbReference>
<dbReference type="CDD" id="cd02508">
    <property type="entry name" value="ADP_Glucose_PP"/>
    <property type="match status" value="1"/>
</dbReference>
<dbReference type="CDD" id="cd04651">
    <property type="entry name" value="LbH_G1P_AT_C"/>
    <property type="match status" value="1"/>
</dbReference>
<dbReference type="Gene3D" id="2.160.10.10">
    <property type="entry name" value="Hexapeptide repeat proteins"/>
    <property type="match status" value="1"/>
</dbReference>
<dbReference type="Gene3D" id="3.90.550.10">
    <property type="entry name" value="Spore Coat Polysaccharide Biosynthesis Protein SpsA, Chain A"/>
    <property type="match status" value="1"/>
</dbReference>
<dbReference type="HAMAP" id="MF_00624">
    <property type="entry name" value="GlgC"/>
    <property type="match status" value="1"/>
</dbReference>
<dbReference type="InterPro" id="IPR011831">
    <property type="entry name" value="ADP-Glc_PPase"/>
</dbReference>
<dbReference type="InterPro" id="IPR005836">
    <property type="entry name" value="ADP_Glu_pyroP_CS"/>
</dbReference>
<dbReference type="InterPro" id="IPR023049">
    <property type="entry name" value="GlgC_bac"/>
</dbReference>
<dbReference type="InterPro" id="IPR056818">
    <property type="entry name" value="GlmU/GlgC-like_hexapep"/>
</dbReference>
<dbReference type="InterPro" id="IPR005835">
    <property type="entry name" value="NTP_transferase_dom"/>
</dbReference>
<dbReference type="InterPro" id="IPR029044">
    <property type="entry name" value="Nucleotide-diphossugar_trans"/>
</dbReference>
<dbReference type="InterPro" id="IPR011004">
    <property type="entry name" value="Trimer_LpxA-like_sf"/>
</dbReference>
<dbReference type="NCBIfam" id="TIGR02091">
    <property type="entry name" value="glgC"/>
    <property type="match status" value="1"/>
</dbReference>
<dbReference type="NCBIfam" id="NF001947">
    <property type="entry name" value="PRK00725.1"/>
    <property type="match status" value="1"/>
</dbReference>
<dbReference type="NCBIfam" id="NF002023">
    <property type="entry name" value="PRK00844.1"/>
    <property type="match status" value="1"/>
</dbReference>
<dbReference type="PANTHER" id="PTHR43523:SF2">
    <property type="entry name" value="GLUCOSE-1-PHOSPHATE ADENYLYLTRANSFERASE"/>
    <property type="match status" value="1"/>
</dbReference>
<dbReference type="PANTHER" id="PTHR43523">
    <property type="entry name" value="GLUCOSE-1-PHOSPHATE ADENYLYLTRANSFERASE-RELATED"/>
    <property type="match status" value="1"/>
</dbReference>
<dbReference type="Pfam" id="PF24894">
    <property type="entry name" value="Hexapep_GlmU"/>
    <property type="match status" value="1"/>
</dbReference>
<dbReference type="Pfam" id="PF00483">
    <property type="entry name" value="NTP_transferase"/>
    <property type="match status" value="1"/>
</dbReference>
<dbReference type="SUPFAM" id="SSF53448">
    <property type="entry name" value="Nucleotide-diphospho-sugar transferases"/>
    <property type="match status" value="1"/>
</dbReference>
<dbReference type="SUPFAM" id="SSF51161">
    <property type="entry name" value="Trimeric LpxA-like enzymes"/>
    <property type="match status" value="1"/>
</dbReference>
<dbReference type="PROSITE" id="PS00808">
    <property type="entry name" value="ADP_GLC_PYROPHOSPH_1"/>
    <property type="match status" value="1"/>
</dbReference>
<dbReference type="PROSITE" id="PS00809">
    <property type="entry name" value="ADP_GLC_PYROPHOSPH_2"/>
    <property type="match status" value="1"/>
</dbReference>
<dbReference type="PROSITE" id="PS00810">
    <property type="entry name" value="ADP_GLC_PYROPHOSPH_3"/>
    <property type="match status" value="1"/>
</dbReference>
<organism>
    <name type="scientific">Shewanella baltica (strain OS185)</name>
    <dbReference type="NCBI Taxonomy" id="402882"/>
    <lineage>
        <taxon>Bacteria</taxon>
        <taxon>Pseudomonadati</taxon>
        <taxon>Pseudomonadota</taxon>
        <taxon>Gammaproteobacteria</taxon>
        <taxon>Alteromonadales</taxon>
        <taxon>Shewanellaceae</taxon>
        <taxon>Shewanella</taxon>
    </lineage>
</organism>
<proteinExistence type="inferred from homology"/>
<reference key="1">
    <citation type="submission" date="2007-07" db="EMBL/GenBank/DDBJ databases">
        <title>Complete sequence of chromosome of Shewanella baltica OS185.</title>
        <authorList>
            <consortium name="US DOE Joint Genome Institute"/>
            <person name="Copeland A."/>
            <person name="Lucas S."/>
            <person name="Lapidus A."/>
            <person name="Barry K."/>
            <person name="Glavina del Rio T."/>
            <person name="Dalin E."/>
            <person name="Tice H."/>
            <person name="Pitluck S."/>
            <person name="Sims D."/>
            <person name="Brettin T."/>
            <person name="Bruce D."/>
            <person name="Detter J.C."/>
            <person name="Han C."/>
            <person name="Schmutz J."/>
            <person name="Larimer F."/>
            <person name="Land M."/>
            <person name="Hauser L."/>
            <person name="Kyrpides N."/>
            <person name="Mikhailova N."/>
            <person name="Brettar I."/>
            <person name="Rodrigues J."/>
            <person name="Konstantinidis K."/>
            <person name="Tiedje J."/>
            <person name="Richardson P."/>
        </authorList>
    </citation>
    <scope>NUCLEOTIDE SEQUENCE [LARGE SCALE GENOMIC DNA]</scope>
    <source>
        <strain>OS185</strain>
    </source>
</reference>
<comment type="function">
    <text evidence="1">Involved in the biosynthesis of ADP-glucose, a building block required for the elongation reactions to produce glycogen. Catalyzes the reaction between ATP and alpha-D-glucose 1-phosphate (G1P) to produce pyrophosphate and ADP-Glc.</text>
</comment>
<comment type="catalytic activity">
    <reaction evidence="1">
        <text>alpha-D-glucose 1-phosphate + ATP + H(+) = ADP-alpha-D-glucose + diphosphate</text>
        <dbReference type="Rhea" id="RHEA:12120"/>
        <dbReference type="ChEBI" id="CHEBI:15378"/>
        <dbReference type="ChEBI" id="CHEBI:30616"/>
        <dbReference type="ChEBI" id="CHEBI:33019"/>
        <dbReference type="ChEBI" id="CHEBI:57498"/>
        <dbReference type="ChEBI" id="CHEBI:58601"/>
        <dbReference type="EC" id="2.7.7.27"/>
    </reaction>
</comment>
<comment type="pathway">
    <text evidence="1">Glycan biosynthesis; glycogen biosynthesis.</text>
</comment>
<comment type="subunit">
    <text evidence="1">Homotetramer.</text>
</comment>
<comment type="similarity">
    <text evidence="1">Belongs to the bacterial/plant glucose-1-phosphate adenylyltransferase family.</text>
</comment>